<feature type="chain" id="PRO_1000050367" description="L-seryl-tRNA(Sec) selenium transferase">
    <location>
        <begin position="1"/>
        <end position="461"/>
    </location>
</feature>
<feature type="modified residue" description="N6-(pyridoxal phosphate)lysine" evidence="1">
    <location>
        <position position="294"/>
    </location>
</feature>
<protein>
    <recommendedName>
        <fullName evidence="1">L-seryl-tRNA(Sec) selenium transferase</fullName>
        <ecNumber evidence="1">2.9.1.1</ecNumber>
    </recommendedName>
    <alternativeName>
        <fullName evidence="1">Selenocysteine synthase</fullName>
        <shortName evidence="1">Sec synthase</shortName>
    </alternativeName>
    <alternativeName>
        <fullName evidence="1">Selenocysteinyl-tRNA(Sec) synthase</fullName>
    </alternativeName>
</protein>
<accession>Q4QML1</accession>
<gene>
    <name evidence="1" type="primary">selA</name>
    <name type="ordered locus">NTHI0835</name>
</gene>
<dbReference type="EC" id="2.9.1.1" evidence="1"/>
<dbReference type="EMBL" id="CP000057">
    <property type="protein sequence ID" value="AAX87736.1"/>
    <property type="molecule type" value="Genomic_DNA"/>
</dbReference>
<dbReference type="RefSeq" id="WP_011272183.1">
    <property type="nucleotide sequence ID" value="NC_007146.2"/>
</dbReference>
<dbReference type="SMR" id="Q4QML1"/>
<dbReference type="KEGG" id="hit:NTHI0835"/>
<dbReference type="HOGENOM" id="CLU_038142_1_0_6"/>
<dbReference type="UniPathway" id="UPA00906">
    <property type="reaction ID" value="UER00896"/>
</dbReference>
<dbReference type="Proteomes" id="UP000002525">
    <property type="component" value="Chromosome"/>
</dbReference>
<dbReference type="GO" id="GO:0005737">
    <property type="term" value="C:cytoplasm"/>
    <property type="evidence" value="ECO:0007669"/>
    <property type="project" value="UniProtKB-SubCell"/>
</dbReference>
<dbReference type="GO" id="GO:0004125">
    <property type="term" value="F:L-seryl-tRNA(Sec) selenium transferase activity"/>
    <property type="evidence" value="ECO:0007669"/>
    <property type="project" value="UniProtKB-UniRule"/>
</dbReference>
<dbReference type="GO" id="GO:0001717">
    <property type="term" value="P:conversion of seryl-tRNAsec to selenocys-tRNAsec"/>
    <property type="evidence" value="ECO:0007669"/>
    <property type="project" value="UniProtKB-UniRule"/>
</dbReference>
<dbReference type="GO" id="GO:0001514">
    <property type="term" value="P:selenocysteine incorporation"/>
    <property type="evidence" value="ECO:0007669"/>
    <property type="project" value="UniProtKB-UniRule"/>
</dbReference>
<dbReference type="FunFam" id="3.40.640.10:FF:000028">
    <property type="entry name" value="L-seryl-tRNA(Sec) selenium transferase"/>
    <property type="match status" value="1"/>
</dbReference>
<dbReference type="Gene3D" id="3.90.1150.180">
    <property type="match status" value="1"/>
</dbReference>
<dbReference type="Gene3D" id="3.40.640.10">
    <property type="entry name" value="Type I PLP-dependent aspartate aminotransferase-like (Major domain)"/>
    <property type="match status" value="1"/>
</dbReference>
<dbReference type="HAMAP" id="MF_00423">
    <property type="entry name" value="SelA"/>
    <property type="match status" value="1"/>
</dbReference>
<dbReference type="InterPro" id="IPR015424">
    <property type="entry name" value="PyrdxlP-dep_Trfase"/>
</dbReference>
<dbReference type="InterPro" id="IPR015421">
    <property type="entry name" value="PyrdxlP-dep_Trfase_major"/>
</dbReference>
<dbReference type="InterPro" id="IPR018319">
    <property type="entry name" value="SelA-like"/>
</dbReference>
<dbReference type="InterPro" id="IPR004534">
    <property type="entry name" value="SelA_trans"/>
</dbReference>
<dbReference type="InterPro" id="IPR025862">
    <property type="entry name" value="SelA_trans_N_dom"/>
</dbReference>
<dbReference type="NCBIfam" id="TIGR00474">
    <property type="entry name" value="selA"/>
    <property type="match status" value="1"/>
</dbReference>
<dbReference type="PANTHER" id="PTHR32328">
    <property type="entry name" value="L-SERYL-TRNA(SEC) SELENIUM TRANSFERASE"/>
    <property type="match status" value="1"/>
</dbReference>
<dbReference type="PANTHER" id="PTHR32328:SF0">
    <property type="entry name" value="L-SERYL-TRNA(SEC) SELENIUM TRANSFERASE"/>
    <property type="match status" value="1"/>
</dbReference>
<dbReference type="Pfam" id="PF12390">
    <property type="entry name" value="Se-cys_synth_N"/>
    <property type="match status" value="1"/>
</dbReference>
<dbReference type="Pfam" id="PF03841">
    <property type="entry name" value="SelA"/>
    <property type="match status" value="1"/>
</dbReference>
<dbReference type="SUPFAM" id="SSF53383">
    <property type="entry name" value="PLP-dependent transferases"/>
    <property type="match status" value="1"/>
</dbReference>
<keyword id="KW-0963">Cytoplasm</keyword>
<keyword id="KW-0648">Protein biosynthesis</keyword>
<keyword id="KW-0663">Pyridoxal phosphate</keyword>
<keyword id="KW-0711">Selenium</keyword>
<keyword id="KW-0808">Transferase</keyword>
<name>SELA_HAEI8</name>
<proteinExistence type="inferred from homology"/>
<organism>
    <name type="scientific">Haemophilus influenzae (strain 86-028NP)</name>
    <dbReference type="NCBI Taxonomy" id="281310"/>
    <lineage>
        <taxon>Bacteria</taxon>
        <taxon>Pseudomonadati</taxon>
        <taxon>Pseudomonadota</taxon>
        <taxon>Gammaproteobacteria</taxon>
        <taxon>Pasteurellales</taxon>
        <taxon>Pasteurellaceae</taxon>
        <taxon>Haemophilus</taxon>
    </lineage>
</organism>
<reference key="1">
    <citation type="journal article" date="2005" name="J. Bacteriol.">
        <title>Genomic sequence of an otitis media isolate of nontypeable Haemophilus influenzae: comparative study with H. influenzae serotype d, strain KW20.</title>
        <authorList>
            <person name="Harrison A."/>
            <person name="Dyer D.W."/>
            <person name="Gillaspy A."/>
            <person name="Ray W.C."/>
            <person name="Mungur R."/>
            <person name="Carson M.B."/>
            <person name="Zhong H."/>
            <person name="Gipson J."/>
            <person name="Gipson M."/>
            <person name="Johnson L.S."/>
            <person name="Lewis L."/>
            <person name="Bakaletz L.O."/>
            <person name="Munson R.S. Jr."/>
        </authorList>
    </citation>
    <scope>NUCLEOTIDE SEQUENCE [LARGE SCALE GENOMIC DNA]</scope>
    <source>
        <strain>86-028NP</strain>
    </source>
</reference>
<sequence length="461" mass="51054">MTALFQQLPSVDKILKTSQGLQLITEFGHTAVVATCRELLTQARQFIKKNNQLPEYFSNFDRTFVEIHSRLQKQNQVQIKAVHNLTGTVLHTNLGRALWSEAAQQAALSVMQKNVSLEYDLDKGKRSHRDNYISELLCKLTGAEAACIVNNNAAAVLLMLATFAQGKEVIISRGELIEIGGAFRIPDIMEQAGCYLVEVGTTNRTHLKDYRNAITENTAFLMKVHSSNYQICGFTSSVSEEELAELGREMNVPVVTDLGSGALIDLSQYGLPKESTVQEKVAQGVGLVSFSGDKLLGGVQAGIIVGKKEWIEQLQAHPLKRALRCDKVILAGLEATLRLYLNPEKLTEKLPTLYLLTQPLKQLKINAMRLKERLESRLNSQFDIQIEASQAQIGSGSQPMERIPSVAVTIAEKTNVKLSALSARFKQLSQPIIGRMENGKIWLDLRSLAAIETLLNTLDEL</sequence>
<evidence type="ECO:0000255" key="1">
    <source>
        <dbReference type="HAMAP-Rule" id="MF_00423"/>
    </source>
</evidence>
<comment type="function">
    <text evidence="1">Converts seryl-tRNA(Sec) to selenocysteinyl-tRNA(Sec) required for selenoprotein biosynthesis.</text>
</comment>
<comment type="catalytic activity">
    <reaction evidence="1">
        <text>L-seryl-tRNA(Sec) + selenophosphate + H(+) = L-selenocysteinyl-tRNA(Sec) + phosphate</text>
        <dbReference type="Rhea" id="RHEA:22728"/>
        <dbReference type="Rhea" id="RHEA-COMP:9742"/>
        <dbReference type="Rhea" id="RHEA-COMP:9743"/>
        <dbReference type="ChEBI" id="CHEBI:15378"/>
        <dbReference type="ChEBI" id="CHEBI:16144"/>
        <dbReference type="ChEBI" id="CHEBI:43474"/>
        <dbReference type="ChEBI" id="CHEBI:78533"/>
        <dbReference type="ChEBI" id="CHEBI:78573"/>
        <dbReference type="EC" id="2.9.1.1"/>
    </reaction>
</comment>
<comment type="cofactor">
    <cofactor evidence="1">
        <name>pyridoxal 5'-phosphate</name>
        <dbReference type="ChEBI" id="CHEBI:597326"/>
    </cofactor>
</comment>
<comment type="pathway">
    <text evidence="1">Aminoacyl-tRNA biosynthesis; selenocysteinyl-tRNA(Sec) biosynthesis; selenocysteinyl-tRNA(Sec) from L-seryl-tRNA(Sec) (bacterial route): step 1/1.</text>
</comment>
<comment type="subcellular location">
    <subcellularLocation>
        <location evidence="1">Cytoplasm</location>
    </subcellularLocation>
</comment>
<comment type="similarity">
    <text evidence="1">Belongs to the SelA family.</text>
</comment>